<gene>
    <name type="primary">rps4</name>
</gene>
<proteinExistence type="inferred from homology"/>
<geneLocation type="chloroplast"/>
<feature type="chain" id="PRO_0000277022" description="Small ribosomal subunit protein uS4c">
    <location>
        <begin position="1"/>
        <end position="201"/>
    </location>
</feature>
<feature type="domain" description="S4 RNA-binding">
    <location>
        <begin position="89"/>
        <end position="149"/>
    </location>
</feature>
<feature type="region of interest" description="Disordered" evidence="2">
    <location>
        <begin position="20"/>
        <end position="43"/>
    </location>
</feature>
<reference key="1">
    <citation type="journal article" date="2006" name="BMC Evol. Biol.">
        <title>Phylogenetic analyses of Vitis (Vitaceae) based on complete chloroplast genome sequences: effects of taxon sampling and phylogenetic methods on resolving relationships among rosids.</title>
        <authorList>
            <person name="Jansen R.K."/>
            <person name="Kaittanis C."/>
            <person name="Lee S.-B."/>
            <person name="Saski C."/>
            <person name="Tomkins J."/>
            <person name="Alverson A.J."/>
            <person name="Daniell H."/>
        </authorList>
    </citation>
    <scope>NUCLEOTIDE SEQUENCE [LARGE SCALE GENOMIC DNA]</scope>
    <source>
        <strain>cv. Maxxa</strain>
    </source>
</reference>
<protein>
    <recommendedName>
        <fullName evidence="3">Small ribosomal subunit protein uS4c</fullName>
    </recommendedName>
    <alternativeName>
        <fullName>30S ribosomal protein S4, chloroplastic</fullName>
    </alternativeName>
</protein>
<sequence length="201" mass="23240">MSRYRGPRFKKIRRLGALPGLTSKRPRAGSDLRNQSRSGKRSQYRIRLEEKQKLRFHYGLTERQLLNYVRIAGKAKGATGRVLLQLLEMRLDNILFRLGMASTIPGARQLVNHRHILVNGRIVDIPSYRCKPRDIITAGNEQKSRALIQNVFDSSSHEELPKHLTLHPFQFKGLVNQIIDSNWVGLKINELLVVEYYSRQT</sequence>
<organism>
    <name type="scientific">Vitis vinifera</name>
    <name type="common">Grape</name>
    <dbReference type="NCBI Taxonomy" id="29760"/>
    <lineage>
        <taxon>Eukaryota</taxon>
        <taxon>Viridiplantae</taxon>
        <taxon>Streptophyta</taxon>
        <taxon>Embryophyta</taxon>
        <taxon>Tracheophyta</taxon>
        <taxon>Spermatophyta</taxon>
        <taxon>Magnoliopsida</taxon>
        <taxon>eudicotyledons</taxon>
        <taxon>Gunneridae</taxon>
        <taxon>Pentapetalae</taxon>
        <taxon>rosids</taxon>
        <taxon>Vitales</taxon>
        <taxon>Vitaceae</taxon>
        <taxon>Viteae</taxon>
        <taxon>Vitis</taxon>
    </lineage>
</organism>
<evidence type="ECO:0000250" key="1"/>
<evidence type="ECO:0000256" key="2">
    <source>
        <dbReference type="SAM" id="MobiDB-lite"/>
    </source>
</evidence>
<evidence type="ECO:0000305" key="3"/>
<keyword id="KW-0150">Chloroplast</keyword>
<keyword id="KW-0934">Plastid</keyword>
<keyword id="KW-1185">Reference proteome</keyword>
<keyword id="KW-0687">Ribonucleoprotein</keyword>
<keyword id="KW-0689">Ribosomal protein</keyword>
<keyword id="KW-0694">RNA-binding</keyword>
<keyword id="KW-0699">rRNA-binding</keyword>
<dbReference type="EMBL" id="DQ424856">
    <property type="protein sequence ID" value="ABE47536.1"/>
    <property type="molecule type" value="Genomic_DNA"/>
</dbReference>
<dbReference type="RefSeq" id="YP_567078.1">
    <property type="nucleotide sequence ID" value="NC_007957.1"/>
</dbReference>
<dbReference type="SMR" id="Q0ZJ18"/>
<dbReference type="FunCoup" id="Q0ZJ18">
    <property type="interactions" value="230"/>
</dbReference>
<dbReference type="STRING" id="29760.Q0ZJ18"/>
<dbReference type="PaxDb" id="29760-VIT_14s0030g00680.t01"/>
<dbReference type="GeneID" id="4025094"/>
<dbReference type="KEGG" id="vvi:4025094"/>
<dbReference type="eggNOG" id="KOG3301">
    <property type="taxonomic scope" value="Eukaryota"/>
</dbReference>
<dbReference type="InParanoid" id="Q0ZJ18"/>
<dbReference type="OrthoDB" id="138757at71240"/>
<dbReference type="Proteomes" id="UP000009183">
    <property type="component" value="Chloroplast"/>
</dbReference>
<dbReference type="ExpressionAtlas" id="Q0ZJ18">
    <property type="expression patterns" value="baseline and differential"/>
</dbReference>
<dbReference type="GO" id="GO:0009507">
    <property type="term" value="C:chloroplast"/>
    <property type="evidence" value="ECO:0007669"/>
    <property type="project" value="UniProtKB-SubCell"/>
</dbReference>
<dbReference type="GO" id="GO:0015935">
    <property type="term" value="C:small ribosomal subunit"/>
    <property type="evidence" value="ECO:0000318"/>
    <property type="project" value="GO_Central"/>
</dbReference>
<dbReference type="GO" id="GO:0019843">
    <property type="term" value="F:rRNA binding"/>
    <property type="evidence" value="ECO:0000318"/>
    <property type="project" value="GO_Central"/>
</dbReference>
<dbReference type="GO" id="GO:0003735">
    <property type="term" value="F:structural constituent of ribosome"/>
    <property type="evidence" value="ECO:0000318"/>
    <property type="project" value="GO_Central"/>
</dbReference>
<dbReference type="GO" id="GO:0042274">
    <property type="term" value="P:ribosomal small subunit biogenesis"/>
    <property type="evidence" value="ECO:0000318"/>
    <property type="project" value="GO_Central"/>
</dbReference>
<dbReference type="GO" id="GO:0006412">
    <property type="term" value="P:translation"/>
    <property type="evidence" value="ECO:0007669"/>
    <property type="project" value="UniProtKB-UniRule"/>
</dbReference>
<dbReference type="CDD" id="cd00165">
    <property type="entry name" value="S4"/>
    <property type="match status" value="1"/>
</dbReference>
<dbReference type="FunFam" id="1.10.1050.10:FF:000002">
    <property type="entry name" value="30S ribosomal protein S4, chloroplastic"/>
    <property type="match status" value="1"/>
</dbReference>
<dbReference type="FunFam" id="3.10.290.10:FF:000081">
    <property type="entry name" value="30S ribosomal protein S4, chloroplastic"/>
    <property type="match status" value="1"/>
</dbReference>
<dbReference type="Gene3D" id="1.10.1050.10">
    <property type="entry name" value="Ribosomal Protein S4 Delta 41, Chain A, domain 1"/>
    <property type="match status" value="1"/>
</dbReference>
<dbReference type="Gene3D" id="3.10.290.10">
    <property type="entry name" value="RNA-binding S4 domain"/>
    <property type="match status" value="1"/>
</dbReference>
<dbReference type="HAMAP" id="MF_01306_B">
    <property type="entry name" value="Ribosomal_uS4_B"/>
    <property type="match status" value="1"/>
</dbReference>
<dbReference type="InterPro" id="IPR022801">
    <property type="entry name" value="Ribosomal_uS4"/>
</dbReference>
<dbReference type="InterPro" id="IPR005709">
    <property type="entry name" value="Ribosomal_uS4_bac-type"/>
</dbReference>
<dbReference type="InterPro" id="IPR018079">
    <property type="entry name" value="Ribosomal_uS4_CS"/>
</dbReference>
<dbReference type="InterPro" id="IPR001912">
    <property type="entry name" value="Ribosomal_uS4_N"/>
</dbReference>
<dbReference type="InterPro" id="IPR002942">
    <property type="entry name" value="S4_RNA-bd"/>
</dbReference>
<dbReference type="InterPro" id="IPR036986">
    <property type="entry name" value="S4_RNA-bd_sf"/>
</dbReference>
<dbReference type="NCBIfam" id="NF003717">
    <property type="entry name" value="PRK05327.1"/>
    <property type="match status" value="1"/>
</dbReference>
<dbReference type="NCBIfam" id="TIGR01017">
    <property type="entry name" value="rpsD_bact"/>
    <property type="match status" value="1"/>
</dbReference>
<dbReference type="PANTHER" id="PTHR11831">
    <property type="entry name" value="30S 40S RIBOSOMAL PROTEIN"/>
    <property type="match status" value="1"/>
</dbReference>
<dbReference type="PANTHER" id="PTHR11831:SF4">
    <property type="entry name" value="SMALL RIBOSOMAL SUBUNIT PROTEIN US4M"/>
    <property type="match status" value="1"/>
</dbReference>
<dbReference type="Pfam" id="PF00163">
    <property type="entry name" value="Ribosomal_S4"/>
    <property type="match status" value="1"/>
</dbReference>
<dbReference type="Pfam" id="PF01479">
    <property type="entry name" value="S4"/>
    <property type="match status" value="1"/>
</dbReference>
<dbReference type="SMART" id="SM01390">
    <property type="entry name" value="Ribosomal_S4"/>
    <property type="match status" value="1"/>
</dbReference>
<dbReference type="SMART" id="SM00363">
    <property type="entry name" value="S4"/>
    <property type="match status" value="1"/>
</dbReference>
<dbReference type="SUPFAM" id="SSF55174">
    <property type="entry name" value="Alpha-L RNA-binding motif"/>
    <property type="match status" value="1"/>
</dbReference>
<dbReference type="PROSITE" id="PS00632">
    <property type="entry name" value="RIBOSOMAL_S4"/>
    <property type="match status" value="1"/>
</dbReference>
<dbReference type="PROSITE" id="PS50889">
    <property type="entry name" value="S4"/>
    <property type="match status" value="1"/>
</dbReference>
<comment type="function">
    <text evidence="1">One of the primary rRNA binding proteins, it binds directly to 16S rRNA where it nucleates assembly of the body of the 30S subunit.</text>
</comment>
<comment type="function">
    <text evidence="1">With S5 and S12 plays an important role in translational accuracy.</text>
</comment>
<comment type="subunit">
    <text evidence="1">Part of the 30S ribosomal subunit. Contacts protein S5. The interaction surface between S4 and S5 is involved in control of translational fidelity (By similarity).</text>
</comment>
<comment type="subcellular location">
    <subcellularLocation>
        <location>Plastid</location>
        <location>Chloroplast</location>
    </subcellularLocation>
</comment>
<comment type="similarity">
    <text evidence="3">Belongs to the universal ribosomal protein uS4 family.</text>
</comment>
<name>RR4_VITVI</name>
<accession>Q0ZJ18</accession>